<dbReference type="EMBL" id="X07067">
    <property type="protein sequence ID" value="CAA30103.1"/>
    <property type="molecule type" value="mRNA"/>
</dbReference>
<dbReference type="PIR" id="A28529">
    <property type="entry name" value="A28529"/>
</dbReference>
<dbReference type="SMR" id="P05377"/>
<dbReference type="GlyCosmos" id="P05377">
    <property type="glycosylation" value="1 site, No reported glycans"/>
</dbReference>
<dbReference type="GeneID" id="445823"/>
<dbReference type="CTD" id="445823"/>
<dbReference type="Xenbase" id="XB-GENE-6252266">
    <property type="gene designation" value="chrna1.S"/>
</dbReference>
<dbReference type="Proteomes" id="UP000186698">
    <property type="component" value="Unplaced"/>
</dbReference>
<dbReference type="GO" id="GO:0005892">
    <property type="term" value="C:acetylcholine-gated channel complex"/>
    <property type="evidence" value="ECO:0000318"/>
    <property type="project" value="GO_Central"/>
</dbReference>
<dbReference type="GO" id="GO:0043005">
    <property type="term" value="C:neuron projection"/>
    <property type="evidence" value="ECO:0000318"/>
    <property type="project" value="GO_Central"/>
</dbReference>
<dbReference type="GO" id="GO:0005886">
    <property type="term" value="C:plasma membrane"/>
    <property type="evidence" value="ECO:0000318"/>
    <property type="project" value="GO_Central"/>
</dbReference>
<dbReference type="GO" id="GO:0045211">
    <property type="term" value="C:postsynaptic membrane"/>
    <property type="evidence" value="ECO:0007669"/>
    <property type="project" value="UniProtKB-SubCell"/>
</dbReference>
<dbReference type="GO" id="GO:0045202">
    <property type="term" value="C:synapse"/>
    <property type="evidence" value="ECO:0000318"/>
    <property type="project" value="GO_Central"/>
</dbReference>
<dbReference type="GO" id="GO:0022848">
    <property type="term" value="F:acetylcholine-gated monoatomic cation-selective channel activity"/>
    <property type="evidence" value="ECO:0000318"/>
    <property type="project" value="GO_Central"/>
</dbReference>
<dbReference type="GO" id="GO:0004888">
    <property type="term" value="F:transmembrane signaling receptor activity"/>
    <property type="evidence" value="ECO:0007669"/>
    <property type="project" value="InterPro"/>
</dbReference>
<dbReference type="GO" id="GO:0095500">
    <property type="term" value="P:acetylcholine receptor signaling pathway"/>
    <property type="evidence" value="ECO:0000318"/>
    <property type="project" value="GO_Central"/>
</dbReference>
<dbReference type="GO" id="GO:0051899">
    <property type="term" value="P:membrane depolarization"/>
    <property type="evidence" value="ECO:0000318"/>
    <property type="project" value="GO_Central"/>
</dbReference>
<dbReference type="GO" id="GO:0034220">
    <property type="term" value="P:monoatomic ion transmembrane transport"/>
    <property type="evidence" value="ECO:0000318"/>
    <property type="project" value="GO_Central"/>
</dbReference>
<dbReference type="GO" id="GO:0007274">
    <property type="term" value="P:neuromuscular synaptic transmission"/>
    <property type="evidence" value="ECO:0000318"/>
    <property type="project" value="GO_Central"/>
</dbReference>
<dbReference type="GO" id="GO:0035094">
    <property type="term" value="P:response to nicotine"/>
    <property type="evidence" value="ECO:0000318"/>
    <property type="project" value="GO_Central"/>
</dbReference>
<dbReference type="GO" id="GO:0007271">
    <property type="term" value="P:synaptic transmission, cholinergic"/>
    <property type="evidence" value="ECO:0000318"/>
    <property type="project" value="GO_Central"/>
</dbReference>
<dbReference type="CDD" id="cd19014">
    <property type="entry name" value="LGIC_ECD_nAChR_A1"/>
    <property type="match status" value="1"/>
</dbReference>
<dbReference type="CDD" id="cd19064">
    <property type="entry name" value="LGIC_TM_nAChR"/>
    <property type="match status" value="1"/>
</dbReference>
<dbReference type="FunFam" id="1.20.58.390:FF:000013">
    <property type="entry name" value="Putative acetylcholine receptor subunit alpha"/>
    <property type="match status" value="1"/>
</dbReference>
<dbReference type="FunFam" id="1.20.58.390:FF:000016">
    <property type="entry name" value="Putative acetylcholine receptor subunit alpha"/>
    <property type="match status" value="1"/>
</dbReference>
<dbReference type="FunFam" id="2.70.170.10:FF:000019">
    <property type="entry name" value="Putative acetylcholine receptor subunit alpha"/>
    <property type="match status" value="1"/>
</dbReference>
<dbReference type="Gene3D" id="2.70.170.10">
    <property type="entry name" value="Neurotransmitter-gated ion-channel ligand-binding domain"/>
    <property type="match status" value="1"/>
</dbReference>
<dbReference type="Gene3D" id="1.20.58.390">
    <property type="entry name" value="Neurotransmitter-gated ion-channel transmembrane domain"/>
    <property type="match status" value="2"/>
</dbReference>
<dbReference type="InterPro" id="IPR006202">
    <property type="entry name" value="Neur_chan_lig-bd"/>
</dbReference>
<dbReference type="InterPro" id="IPR036734">
    <property type="entry name" value="Neur_chan_lig-bd_sf"/>
</dbReference>
<dbReference type="InterPro" id="IPR006201">
    <property type="entry name" value="Neur_channel"/>
</dbReference>
<dbReference type="InterPro" id="IPR036719">
    <property type="entry name" value="Neuro-gated_channel_TM_sf"/>
</dbReference>
<dbReference type="InterPro" id="IPR038050">
    <property type="entry name" value="Neuro_actylchol_rec"/>
</dbReference>
<dbReference type="InterPro" id="IPR006029">
    <property type="entry name" value="Neurotrans-gated_channel_TM"/>
</dbReference>
<dbReference type="InterPro" id="IPR018000">
    <property type="entry name" value="Neurotransmitter_ion_chnl_CS"/>
</dbReference>
<dbReference type="InterPro" id="IPR002394">
    <property type="entry name" value="Nicotinic_acetylcholine_rcpt"/>
</dbReference>
<dbReference type="NCBIfam" id="TIGR00860">
    <property type="entry name" value="LIC"/>
    <property type="match status" value="1"/>
</dbReference>
<dbReference type="PANTHER" id="PTHR18945">
    <property type="entry name" value="NEUROTRANSMITTER GATED ION CHANNEL"/>
    <property type="match status" value="1"/>
</dbReference>
<dbReference type="Pfam" id="PF02931">
    <property type="entry name" value="Neur_chan_LBD"/>
    <property type="match status" value="1"/>
</dbReference>
<dbReference type="Pfam" id="PF02932">
    <property type="entry name" value="Neur_chan_memb"/>
    <property type="match status" value="1"/>
</dbReference>
<dbReference type="PRINTS" id="PR00254">
    <property type="entry name" value="NICOTINICR"/>
</dbReference>
<dbReference type="PRINTS" id="PR00252">
    <property type="entry name" value="NRIONCHANNEL"/>
</dbReference>
<dbReference type="SUPFAM" id="SSF90112">
    <property type="entry name" value="Neurotransmitter-gated ion-channel transmembrane pore"/>
    <property type="match status" value="1"/>
</dbReference>
<dbReference type="SUPFAM" id="SSF63712">
    <property type="entry name" value="Nicotinic receptor ligand binding domain-like"/>
    <property type="match status" value="1"/>
</dbReference>
<dbReference type="PROSITE" id="PS00236">
    <property type="entry name" value="NEUROTR_ION_CHANNEL"/>
    <property type="match status" value="1"/>
</dbReference>
<gene>
    <name type="primary">chrna1-b</name>
</gene>
<feature type="signal peptide">
    <location>
        <begin position="1"/>
        <end position="20"/>
    </location>
</feature>
<feature type="chain" id="PRO_0000000313" description="Acetylcholine receptor subunit alpha-1-B">
    <location>
        <begin position="21"/>
        <end position="457"/>
    </location>
</feature>
<feature type="topological domain" description="Extracellular">
    <location>
        <begin position="21"/>
        <end position="230"/>
    </location>
</feature>
<feature type="transmembrane region" description="Helical">
    <location>
        <begin position="231"/>
        <end position="255"/>
    </location>
</feature>
<feature type="transmembrane region" description="Helical">
    <location>
        <begin position="263"/>
        <end position="281"/>
    </location>
</feature>
<feature type="transmembrane region" description="Helical">
    <location>
        <begin position="297"/>
        <end position="316"/>
    </location>
</feature>
<feature type="topological domain" description="Cytoplasmic">
    <location>
        <begin position="317"/>
        <end position="428"/>
    </location>
</feature>
<feature type="transmembrane region" description="Helical">
    <location>
        <begin position="429"/>
        <end position="447"/>
    </location>
</feature>
<feature type="glycosylation site" description="N-linked (GlcNAc...) asparagine" evidence="4">
    <location>
        <position position="161"/>
    </location>
</feature>
<feature type="disulfide bond" evidence="1">
    <location>
        <begin position="148"/>
        <end position="162"/>
    </location>
</feature>
<feature type="disulfide bond" description="Associated with receptor activation" evidence="1">
    <location>
        <begin position="212"/>
        <end position="213"/>
    </location>
</feature>
<keyword id="KW-1003">Cell membrane</keyword>
<keyword id="KW-1015">Disulfide bond</keyword>
<keyword id="KW-0325">Glycoprotein</keyword>
<keyword id="KW-0407">Ion channel</keyword>
<keyword id="KW-0406">Ion transport</keyword>
<keyword id="KW-1071">Ligand-gated ion channel</keyword>
<keyword id="KW-0472">Membrane</keyword>
<keyword id="KW-0628">Postsynaptic cell membrane</keyword>
<keyword id="KW-0675">Receptor</keyword>
<keyword id="KW-1185">Reference proteome</keyword>
<keyword id="KW-0732">Signal</keyword>
<keyword id="KW-0770">Synapse</keyword>
<keyword id="KW-0812">Transmembrane</keyword>
<keyword id="KW-1133">Transmembrane helix</keyword>
<keyword id="KW-0813">Transport</keyword>
<proteinExistence type="evidence at transcript level"/>
<evidence type="ECO:0000250" key="1"/>
<evidence type="ECO:0000250" key="2">
    <source>
        <dbReference type="UniProtKB" id="P02708"/>
    </source>
</evidence>
<evidence type="ECO:0000250" key="3">
    <source>
        <dbReference type="UniProtKB" id="P02709"/>
    </source>
</evidence>
<evidence type="ECO:0000255" key="4"/>
<evidence type="ECO:0000305" key="5"/>
<organism>
    <name type="scientific">Xenopus laevis</name>
    <name type="common">African clawed frog</name>
    <dbReference type="NCBI Taxonomy" id="8355"/>
    <lineage>
        <taxon>Eukaryota</taxon>
        <taxon>Metazoa</taxon>
        <taxon>Chordata</taxon>
        <taxon>Craniata</taxon>
        <taxon>Vertebrata</taxon>
        <taxon>Euteleostomi</taxon>
        <taxon>Amphibia</taxon>
        <taxon>Batrachia</taxon>
        <taxon>Anura</taxon>
        <taxon>Pipoidea</taxon>
        <taxon>Pipidae</taxon>
        <taxon>Xenopodinae</taxon>
        <taxon>Xenopus</taxon>
        <taxon>Xenopus</taxon>
    </lineage>
</organism>
<name>ACHAB_XENLA</name>
<protein>
    <recommendedName>
        <fullName>Acetylcholine receptor subunit alpha-1-B</fullName>
    </recommendedName>
</protein>
<comment type="function">
    <text evidence="2">Upon acetylcholine binding, the AChR responds by an extensive change in conformation that affects all subunits and leads to opening of an ion-conducting channel across the plasma membrane.</text>
</comment>
<comment type="catalytic activity">
    <reaction evidence="3">
        <text>K(+)(in) = K(+)(out)</text>
        <dbReference type="Rhea" id="RHEA:29463"/>
        <dbReference type="ChEBI" id="CHEBI:29103"/>
    </reaction>
</comment>
<comment type="catalytic activity">
    <reaction evidence="3">
        <text>Na(+)(in) = Na(+)(out)</text>
        <dbReference type="Rhea" id="RHEA:34963"/>
        <dbReference type="ChEBI" id="CHEBI:29101"/>
    </reaction>
</comment>
<comment type="subunit">
    <text evidence="2">One of the alpha chains that assemble within the acetylcholine receptor, a pentamer of two alpha chains, a beta, a delta, and a gamma or epsilon chains.</text>
</comment>
<comment type="subcellular location">
    <subcellularLocation>
        <location evidence="2">Postsynaptic cell membrane</location>
        <topology evidence="4">Multi-pass membrane protein</topology>
    </subcellularLocation>
    <subcellularLocation>
        <location evidence="2">Cell membrane</location>
        <topology evidence="4">Multi-pass membrane protein</topology>
    </subcellularLocation>
</comment>
<comment type="similarity">
    <text evidence="5">Belongs to the ligand-gated ion channel (TC 1.A.9) family. Acetylcholine receptor (TC 1.A.9.1) subfamily. Alpha-1/CHRNA1 sub-subfamily.</text>
</comment>
<reference key="1">
    <citation type="journal article" date="1988" name="J. Cell Biol.">
        <title>Regulation of acetylcholine receptor transcript expression during development in Xenopus laevis.</title>
        <authorList>
            <person name="Baldwin T.J."/>
            <person name="Yoshihara C.M."/>
            <person name="Blackmer K."/>
            <person name="Kintner C.R."/>
            <person name="Burden S.J."/>
        </authorList>
    </citation>
    <scope>NUCLEOTIDE SEQUENCE [MRNA]</scope>
    <source>
        <tissue>Muscle</tissue>
    </source>
</reference>
<accession>P05377</accession>
<sequence length="457" mass="52107">MDYTASCLIFLFIAAGTVFGTDHETRLIGDLFANYNKVVRPVETYKDQVVVTVGLQLIQLINVDEVNQIVSTNIRLKQQWRDVNLKWDPAKYGGVKKIRIPSSDVWSPDLVLYNNADGDFAISKDTKILLEYTGKITWTPPAIFKSYCEIIVTYFPFDQQNCSMKFGTWTYDGSLLVINPERDRPDLSNFMASGEWMMKDYRCWKHWVYYTCCPDKPYLDITYHFVLQRLPLYFIVNVIIPCLLFSFLTGLVFYLPTDSGEKMTLSISVLLSLTVFLLVIVELIPSTSSAVPLIGKYMLFTMVFVIASIIITVIVINTHHRSPSTHTMPPWVRKIFIETIPNIMFFSTMKRPSQEKQPQKTFAEEMDISHISGKLGPAAVTYQSPALKNPDVKSAIEGIKYIAETMKSDQESNKASEEWKFVAMVLDHILLAVFMTVCVIGTLAVFAGRIIEMNMQE</sequence>